<reference key="1">
    <citation type="journal article" date="2008" name="PLoS ONE">
        <title>Genome sequence of the saprophyte Leptospira biflexa provides insights into the evolution of Leptospira and the pathogenesis of leptospirosis.</title>
        <authorList>
            <person name="Picardeau M."/>
            <person name="Bulach D.M."/>
            <person name="Bouchier C."/>
            <person name="Zuerner R.L."/>
            <person name="Zidane N."/>
            <person name="Wilson P.J."/>
            <person name="Creno S."/>
            <person name="Kuczek E.S."/>
            <person name="Bommezzadri S."/>
            <person name="Davis J.C."/>
            <person name="McGrath A."/>
            <person name="Johnson M.J."/>
            <person name="Boursaux-Eude C."/>
            <person name="Seemann T."/>
            <person name="Rouy Z."/>
            <person name="Coppel R.L."/>
            <person name="Rood J.I."/>
            <person name="Lajus A."/>
            <person name="Davies J.K."/>
            <person name="Medigue C."/>
            <person name="Adler B."/>
        </authorList>
    </citation>
    <scope>NUCLEOTIDE SEQUENCE [LARGE SCALE GENOMIC DNA]</scope>
    <source>
        <strain>Patoc 1 / Ames</strain>
    </source>
</reference>
<proteinExistence type="inferred from homology"/>
<evidence type="ECO:0000255" key="1">
    <source>
        <dbReference type="HAMAP-Rule" id="MF_00097"/>
    </source>
</evidence>
<keyword id="KW-0460">Magnesium</keyword>
<keyword id="KW-0479">Metal-binding</keyword>
<keyword id="KW-0784">Thiamine biosynthesis</keyword>
<keyword id="KW-0808">Transferase</keyword>
<gene>
    <name evidence="1" type="primary">thiE</name>
    <name type="ordered locus">LBF_2631</name>
</gene>
<accession>B0SE83</accession>
<sequence>MQNKIQGVYLVTDRPLCLHHKLEEVVQMAASGGVSLVQLREKDSTSREFLELAIHLKFILSPFQVPLLINDRVDLCLASGADGVHLGQTDLPWLEARRILGKDAIIGLSIETKEDFATLTKEDPNPQLEYLAVSPVFDTPTKTNTKEALGLAGVRWLKEKTDIPVVAIGGINISNAKDVIGAGADMIAVVSAICSAKNPKEATVALRNQF</sequence>
<protein>
    <recommendedName>
        <fullName evidence="1">Thiamine-phosphate synthase</fullName>
        <shortName evidence="1">TP synthase</shortName>
        <shortName evidence="1">TPS</shortName>
        <ecNumber evidence="1">2.5.1.3</ecNumber>
    </recommendedName>
    <alternativeName>
        <fullName evidence="1">Thiamine-phosphate pyrophosphorylase</fullName>
        <shortName evidence="1">TMP pyrophosphorylase</shortName>
        <shortName evidence="1">TMP-PPase</shortName>
    </alternativeName>
</protein>
<name>THIE_LEPBA</name>
<feature type="chain" id="PRO_1000093675" description="Thiamine-phosphate synthase">
    <location>
        <begin position="1"/>
        <end position="210"/>
    </location>
</feature>
<feature type="binding site" evidence="1">
    <location>
        <begin position="38"/>
        <end position="42"/>
    </location>
    <ligand>
        <name>4-amino-2-methyl-5-(diphosphooxymethyl)pyrimidine</name>
        <dbReference type="ChEBI" id="CHEBI:57841"/>
    </ligand>
</feature>
<feature type="binding site" evidence="1">
    <location>
        <position position="70"/>
    </location>
    <ligand>
        <name>4-amino-2-methyl-5-(diphosphooxymethyl)pyrimidine</name>
        <dbReference type="ChEBI" id="CHEBI:57841"/>
    </ligand>
</feature>
<feature type="binding site" evidence="1">
    <location>
        <position position="71"/>
    </location>
    <ligand>
        <name>Mg(2+)</name>
        <dbReference type="ChEBI" id="CHEBI:18420"/>
    </ligand>
</feature>
<feature type="binding site" evidence="1">
    <location>
        <position position="90"/>
    </location>
    <ligand>
        <name>Mg(2+)</name>
        <dbReference type="ChEBI" id="CHEBI:18420"/>
    </ligand>
</feature>
<feature type="binding site" evidence="1">
    <location>
        <position position="109"/>
    </location>
    <ligand>
        <name>4-amino-2-methyl-5-(diphosphooxymethyl)pyrimidine</name>
        <dbReference type="ChEBI" id="CHEBI:57841"/>
    </ligand>
</feature>
<feature type="binding site" evidence="1">
    <location>
        <begin position="139"/>
        <end position="141"/>
    </location>
    <ligand>
        <name>2-[(2R,5Z)-2-carboxy-4-methylthiazol-5(2H)-ylidene]ethyl phosphate</name>
        <dbReference type="ChEBI" id="CHEBI:62899"/>
    </ligand>
</feature>
<feature type="binding site" evidence="1">
    <location>
        <position position="142"/>
    </location>
    <ligand>
        <name>4-amino-2-methyl-5-(diphosphooxymethyl)pyrimidine</name>
        <dbReference type="ChEBI" id="CHEBI:57841"/>
    </ligand>
</feature>
<feature type="binding site" evidence="1">
    <location>
        <position position="170"/>
    </location>
    <ligand>
        <name>2-[(2R,5Z)-2-carboxy-4-methylthiazol-5(2H)-ylidene]ethyl phosphate</name>
        <dbReference type="ChEBI" id="CHEBI:62899"/>
    </ligand>
</feature>
<feature type="binding site" evidence="1">
    <location>
        <begin position="190"/>
        <end position="191"/>
    </location>
    <ligand>
        <name>2-[(2R,5Z)-2-carboxy-4-methylthiazol-5(2H)-ylidene]ethyl phosphate</name>
        <dbReference type="ChEBI" id="CHEBI:62899"/>
    </ligand>
</feature>
<organism>
    <name type="scientific">Leptospira biflexa serovar Patoc (strain Patoc 1 / Ames)</name>
    <dbReference type="NCBI Taxonomy" id="355278"/>
    <lineage>
        <taxon>Bacteria</taxon>
        <taxon>Pseudomonadati</taxon>
        <taxon>Spirochaetota</taxon>
        <taxon>Spirochaetia</taxon>
        <taxon>Leptospirales</taxon>
        <taxon>Leptospiraceae</taxon>
        <taxon>Leptospira</taxon>
    </lineage>
</organism>
<comment type="function">
    <text evidence="1">Condenses 4-methyl-5-(beta-hydroxyethyl)thiazole monophosphate (THZ-P) and 2-methyl-4-amino-5-hydroxymethyl pyrimidine pyrophosphate (HMP-PP) to form thiamine monophosphate (TMP).</text>
</comment>
<comment type="catalytic activity">
    <reaction evidence="1">
        <text>2-[(2R,5Z)-2-carboxy-4-methylthiazol-5(2H)-ylidene]ethyl phosphate + 4-amino-2-methyl-5-(diphosphooxymethyl)pyrimidine + 2 H(+) = thiamine phosphate + CO2 + diphosphate</text>
        <dbReference type="Rhea" id="RHEA:47844"/>
        <dbReference type="ChEBI" id="CHEBI:15378"/>
        <dbReference type="ChEBI" id="CHEBI:16526"/>
        <dbReference type="ChEBI" id="CHEBI:33019"/>
        <dbReference type="ChEBI" id="CHEBI:37575"/>
        <dbReference type="ChEBI" id="CHEBI:57841"/>
        <dbReference type="ChEBI" id="CHEBI:62899"/>
        <dbReference type="EC" id="2.5.1.3"/>
    </reaction>
</comment>
<comment type="catalytic activity">
    <reaction evidence="1">
        <text>2-(2-carboxy-4-methylthiazol-5-yl)ethyl phosphate + 4-amino-2-methyl-5-(diphosphooxymethyl)pyrimidine + 2 H(+) = thiamine phosphate + CO2 + diphosphate</text>
        <dbReference type="Rhea" id="RHEA:47848"/>
        <dbReference type="ChEBI" id="CHEBI:15378"/>
        <dbReference type="ChEBI" id="CHEBI:16526"/>
        <dbReference type="ChEBI" id="CHEBI:33019"/>
        <dbReference type="ChEBI" id="CHEBI:37575"/>
        <dbReference type="ChEBI" id="CHEBI:57841"/>
        <dbReference type="ChEBI" id="CHEBI:62890"/>
        <dbReference type="EC" id="2.5.1.3"/>
    </reaction>
</comment>
<comment type="catalytic activity">
    <reaction evidence="1">
        <text>4-methyl-5-(2-phosphooxyethyl)-thiazole + 4-amino-2-methyl-5-(diphosphooxymethyl)pyrimidine + H(+) = thiamine phosphate + diphosphate</text>
        <dbReference type="Rhea" id="RHEA:22328"/>
        <dbReference type="ChEBI" id="CHEBI:15378"/>
        <dbReference type="ChEBI" id="CHEBI:33019"/>
        <dbReference type="ChEBI" id="CHEBI:37575"/>
        <dbReference type="ChEBI" id="CHEBI:57841"/>
        <dbReference type="ChEBI" id="CHEBI:58296"/>
        <dbReference type="EC" id="2.5.1.3"/>
    </reaction>
</comment>
<comment type="cofactor">
    <cofactor evidence="1">
        <name>Mg(2+)</name>
        <dbReference type="ChEBI" id="CHEBI:18420"/>
    </cofactor>
    <text evidence="1">Binds 1 Mg(2+) ion per subunit.</text>
</comment>
<comment type="pathway">
    <text evidence="1">Cofactor biosynthesis; thiamine diphosphate biosynthesis; thiamine phosphate from 4-amino-2-methyl-5-diphosphomethylpyrimidine and 4-methyl-5-(2-phosphoethyl)-thiazole: step 1/1.</text>
</comment>
<comment type="similarity">
    <text evidence="1">Belongs to the thiamine-phosphate synthase family.</text>
</comment>
<dbReference type="EC" id="2.5.1.3" evidence="1"/>
<dbReference type="EMBL" id="CP000777">
    <property type="protein sequence ID" value="ABZ95114.1"/>
    <property type="molecule type" value="Genomic_DNA"/>
</dbReference>
<dbReference type="RefSeq" id="WP_012389653.1">
    <property type="nucleotide sequence ID" value="NC_010842.1"/>
</dbReference>
<dbReference type="SMR" id="B0SE83"/>
<dbReference type="KEGG" id="lbf:LBF_2631"/>
<dbReference type="HOGENOM" id="CLU_018272_3_2_12"/>
<dbReference type="UniPathway" id="UPA00060">
    <property type="reaction ID" value="UER00141"/>
</dbReference>
<dbReference type="GO" id="GO:0005737">
    <property type="term" value="C:cytoplasm"/>
    <property type="evidence" value="ECO:0007669"/>
    <property type="project" value="TreeGrafter"/>
</dbReference>
<dbReference type="GO" id="GO:0000287">
    <property type="term" value="F:magnesium ion binding"/>
    <property type="evidence" value="ECO:0007669"/>
    <property type="project" value="UniProtKB-UniRule"/>
</dbReference>
<dbReference type="GO" id="GO:0004789">
    <property type="term" value="F:thiamine-phosphate diphosphorylase activity"/>
    <property type="evidence" value="ECO:0007669"/>
    <property type="project" value="UniProtKB-UniRule"/>
</dbReference>
<dbReference type="GO" id="GO:0009228">
    <property type="term" value="P:thiamine biosynthetic process"/>
    <property type="evidence" value="ECO:0007669"/>
    <property type="project" value="UniProtKB-KW"/>
</dbReference>
<dbReference type="GO" id="GO:0009229">
    <property type="term" value="P:thiamine diphosphate biosynthetic process"/>
    <property type="evidence" value="ECO:0007669"/>
    <property type="project" value="UniProtKB-UniRule"/>
</dbReference>
<dbReference type="CDD" id="cd00564">
    <property type="entry name" value="TMP_TenI"/>
    <property type="match status" value="1"/>
</dbReference>
<dbReference type="FunFam" id="3.20.20.70:FF:000096">
    <property type="entry name" value="Thiamine-phosphate synthase"/>
    <property type="match status" value="1"/>
</dbReference>
<dbReference type="Gene3D" id="3.20.20.70">
    <property type="entry name" value="Aldolase class I"/>
    <property type="match status" value="1"/>
</dbReference>
<dbReference type="HAMAP" id="MF_00097">
    <property type="entry name" value="TMP_synthase"/>
    <property type="match status" value="1"/>
</dbReference>
<dbReference type="InterPro" id="IPR013785">
    <property type="entry name" value="Aldolase_TIM"/>
</dbReference>
<dbReference type="InterPro" id="IPR036206">
    <property type="entry name" value="ThiamineP_synth_sf"/>
</dbReference>
<dbReference type="InterPro" id="IPR022998">
    <property type="entry name" value="ThiamineP_synth_TenI"/>
</dbReference>
<dbReference type="InterPro" id="IPR034291">
    <property type="entry name" value="TMP_synthase"/>
</dbReference>
<dbReference type="NCBIfam" id="TIGR00693">
    <property type="entry name" value="thiE"/>
    <property type="match status" value="1"/>
</dbReference>
<dbReference type="PANTHER" id="PTHR20857:SF23">
    <property type="entry name" value="THIAMINE BIOSYNTHETIC BIFUNCTIONAL ENZYME"/>
    <property type="match status" value="1"/>
</dbReference>
<dbReference type="PANTHER" id="PTHR20857">
    <property type="entry name" value="THIAMINE-PHOSPHATE PYROPHOSPHORYLASE"/>
    <property type="match status" value="1"/>
</dbReference>
<dbReference type="Pfam" id="PF02581">
    <property type="entry name" value="TMP-TENI"/>
    <property type="match status" value="1"/>
</dbReference>
<dbReference type="SUPFAM" id="SSF51391">
    <property type="entry name" value="Thiamin phosphate synthase"/>
    <property type="match status" value="1"/>
</dbReference>